<evidence type="ECO:0000250" key="1">
    <source>
        <dbReference type="UniProtKB" id="P67272"/>
    </source>
</evidence>
<evidence type="ECO:0000305" key="2"/>
<keyword id="KW-0479">Metal-binding</keyword>
<keyword id="KW-1185">Reference proteome</keyword>
<feature type="chain" id="PRO_0000147334" description="GTP cyclohydrolase 1 type 2 homolog">
    <location>
        <begin position="1"/>
        <end position="366"/>
    </location>
</feature>
<feature type="binding site" evidence="1">
    <location>
        <position position="64"/>
    </location>
    <ligand>
        <name>a divalent metal cation</name>
        <dbReference type="ChEBI" id="CHEBI:60240"/>
        <label>1</label>
    </ligand>
</feature>
<feature type="binding site" evidence="1">
    <location>
        <position position="65"/>
    </location>
    <ligand>
        <name>a divalent metal cation</name>
        <dbReference type="ChEBI" id="CHEBI:60240"/>
        <label>2</label>
    </ligand>
</feature>
<feature type="binding site" evidence="1">
    <location>
        <position position="102"/>
    </location>
    <ligand>
        <name>a divalent metal cation</name>
        <dbReference type="ChEBI" id="CHEBI:60240"/>
        <label>1</label>
    </ligand>
</feature>
<feature type="binding site" evidence="1">
    <location>
        <position position="326"/>
    </location>
    <ligand>
        <name>a divalent metal cation</name>
        <dbReference type="ChEBI" id="CHEBI:60240"/>
        <label>2</label>
    </ligand>
</feature>
<feature type="binding site" evidence="1">
    <location>
        <position position="329"/>
    </location>
    <ligand>
        <name>a divalent metal cation</name>
        <dbReference type="ChEBI" id="CHEBI:60240"/>
        <label>1</label>
    </ligand>
</feature>
<feature type="binding site" evidence="1">
    <location>
        <position position="329"/>
    </location>
    <ligand>
        <name>a divalent metal cation</name>
        <dbReference type="ChEBI" id="CHEBI:60240"/>
        <label>2</label>
    </ligand>
</feature>
<proteinExistence type="inferred from homology"/>
<gene>
    <name type="ordered locus">SERP1125</name>
</gene>
<protein>
    <recommendedName>
        <fullName>GTP cyclohydrolase 1 type 2 homolog</fullName>
    </recommendedName>
</protein>
<sequence length="366" mass="41697">MKISELMEVLNNHVPFHQAESWDNVGLLIGNDKLDITGILTTLDCTDDVVNQAIELNTNTIIAHHPLIFKGVKRIVEDGYGSIIRKLIQNNINLIALHTNLDVNPKGVNRMLADQIGLENISMINTNSSYYYKVQTFIPKNYIEDFKDSLNELGLAKEGNYEYCFFESEGKGQFKPVGDASPYIGKLDSIEYVDEIKLEFMIKDNELEITKRAILDNHPYETPVFDFIKMNKESEYGLGIIGQLNQTMTLDEFSEYAKKQLNIPSVRYTGQHDSPIKKVAIIGGSGIGFEYKASQLGADVFVTGDIKHHDALDAKIQNVNLLDINHYSEYVMKEGLKELLEKWLFKYENQFPIYASEINTDPFKYK</sequence>
<name>GCH1L_STAEQ</name>
<reference key="1">
    <citation type="journal article" date="2005" name="J. Bacteriol.">
        <title>Insights on evolution of virulence and resistance from the complete genome analysis of an early methicillin-resistant Staphylococcus aureus strain and a biofilm-producing methicillin-resistant Staphylococcus epidermidis strain.</title>
        <authorList>
            <person name="Gill S.R."/>
            <person name="Fouts D.E."/>
            <person name="Archer G.L."/>
            <person name="Mongodin E.F."/>
            <person name="DeBoy R.T."/>
            <person name="Ravel J."/>
            <person name="Paulsen I.T."/>
            <person name="Kolonay J.F."/>
            <person name="Brinkac L.M."/>
            <person name="Beanan M.J."/>
            <person name="Dodson R.J."/>
            <person name="Daugherty S.C."/>
            <person name="Madupu R."/>
            <person name="Angiuoli S.V."/>
            <person name="Durkin A.S."/>
            <person name="Haft D.H."/>
            <person name="Vamathevan J.J."/>
            <person name="Khouri H."/>
            <person name="Utterback T.R."/>
            <person name="Lee C."/>
            <person name="Dimitrov G."/>
            <person name="Jiang L."/>
            <person name="Qin H."/>
            <person name="Weidman J."/>
            <person name="Tran K."/>
            <person name="Kang K.H."/>
            <person name="Hance I.R."/>
            <person name="Nelson K.E."/>
            <person name="Fraser C.M."/>
        </authorList>
    </citation>
    <scope>NUCLEOTIDE SEQUENCE [LARGE SCALE GENOMIC DNA]</scope>
    <source>
        <strain>ATCC 35984 / DSM 28319 / BCRC 17069 / CCUG 31568 / BM 3577 / RP62A</strain>
    </source>
</reference>
<organism>
    <name type="scientific">Staphylococcus epidermidis (strain ATCC 35984 / DSM 28319 / BCRC 17069 / CCUG 31568 / BM 3577 / RP62A)</name>
    <dbReference type="NCBI Taxonomy" id="176279"/>
    <lineage>
        <taxon>Bacteria</taxon>
        <taxon>Bacillati</taxon>
        <taxon>Bacillota</taxon>
        <taxon>Bacilli</taxon>
        <taxon>Bacillales</taxon>
        <taxon>Staphylococcaceae</taxon>
        <taxon>Staphylococcus</taxon>
    </lineage>
</organism>
<comment type="subunit">
    <text evidence="1">Homohexamer.</text>
</comment>
<comment type="similarity">
    <text evidence="2">Belongs to the GTP cyclohydrolase I type 2/NIF3 family.</text>
</comment>
<accession>Q5HNY9</accession>
<dbReference type="EMBL" id="CP000029">
    <property type="protein sequence ID" value="AAW54538.1"/>
    <property type="molecule type" value="Genomic_DNA"/>
</dbReference>
<dbReference type="RefSeq" id="WP_001831093.1">
    <property type="nucleotide sequence ID" value="NC_002976.3"/>
</dbReference>
<dbReference type="SMR" id="Q5HNY9"/>
<dbReference type="STRING" id="176279.SERP1125"/>
<dbReference type="KEGG" id="ser:SERP1125"/>
<dbReference type="eggNOG" id="COG0327">
    <property type="taxonomic scope" value="Bacteria"/>
</dbReference>
<dbReference type="HOGENOM" id="CLU_037423_1_0_9"/>
<dbReference type="Proteomes" id="UP000000531">
    <property type="component" value="Chromosome"/>
</dbReference>
<dbReference type="GO" id="GO:0005737">
    <property type="term" value="C:cytoplasm"/>
    <property type="evidence" value="ECO:0007669"/>
    <property type="project" value="TreeGrafter"/>
</dbReference>
<dbReference type="GO" id="GO:0046872">
    <property type="term" value="F:metal ion binding"/>
    <property type="evidence" value="ECO:0007669"/>
    <property type="project" value="UniProtKB-KW"/>
</dbReference>
<dbReference type="FunFam" id="3.40.1390.30:FF:000001">
    <property type="entry name" value="GTP cyclohydrolase 1 type 2"/>
    <property type="match status" value="1"/>
</dbReference>
<dbReference type="Gene3D" id="3.30.70.120">
    <property type="match status" value="1"/>
</dbReference>
<dbReference type="Gene3D" id="3.40.1390.30">
    <property type="entry name" value="NIF3 (NGG1p interacting factor 3)-like"/>
    <property type="match status" value="1"/>
</dbReference>
<dbReference type="InterPro" id="IPR002678">
    <property type="entry name" value="DUF34/NIF3"/>
</dbReference>
<dbReference type="InterPro" id="IPR017221">
    <property type="entry name" value="DUF34/NIF3_bac"/>
</dbReference>
<dbReference type="InterPro" id="IPR036069">
    <property type="entry name" value="DUF34/NIF3_sf"/>
</dbReference>
<dbReference type="InterPro" id="IPR015867">
    <property type="entry name" value="N-reg_PII/ATP_PRibTrfase_C"/>
</dbReference>
<dbReference type="NCBIfam" id="TIGR00486">
    <property type="entry name" value="YbgI_SA1388"/>
    <property type="match status" value="1"/>
</dbReference>
<dbReference type="PANTHER" id="PTHR13799:SF14">
    <property type="entry name" value="GTP CYCLOHYDROLASE 1 TYPE 2 HOMOLOG"/>
    <property type="match status" value="1"/>
</dbReference>
<dbReference type="PANTHER" id="PTHR13799">
    <property type="entry name" value="NGG1 INTERACTING FACTOR 3"/>
    <property type="match status" value="1"/>
</dbReference>
<dbReference type="Pfam" id="PF01784">
    <property type="entry name" value="DUF34_NIF3"/>
    <property type="match status" value="1"/>
</dbReference>
<dbReference type="PIRSF" id="PIRSF037489">
    <property type="entry name" value="UCP037489_NIF3_YqfO"/>
    <property type="match status" value="1"/>
</dbReference>
<dbReference type="SUPFAM" id="SSF102705">
    <property type="entry name" value="NIF3 (NGG1p interacting factor 3)-like"/>
    <property type="match status" value="1"/>
</dbReference>